<evidence type="ECO:0000250" key="1"/>
<evidence type="ECO:0000255" key="2">
    <source>
        <dbReference type="PROSITE-ProRule" id="PRU00142"/>
    </source>
</evidence>
<evidence type="ECO:0000255" key="3">
    <source>
        <dbReference type="PROSITE-ProRule" id="PRU00150"/>
    </source>
</evidence>
<evidence type="ECO:0000305" key="4"/>
<comment type="function">
    <text evidence="1">Probably involved in the RNA silencing pathway. May bind to short RNAs such as microRNAs (miRNAs) or short interfering RNAs (siRNAs), and represses the translation of mRNAs which are complementary to them (By similarity).</text>
</comment>
<comment type="similarity">
    <text evidence="4">Belongs to the argonaute family. Ago subfamily.</text>
</comment>
<comment type="sequence caution" evidence="4">
    <conflict type="erroneous gene model prediction">
        <sequence resource="EMBL-CDS" id="ABF99267"/>
    </conflict>
</comment>
<comment type="sequence caution" evidence="4">
    <conflict type="erroneous gene model prediction">
        <sequence resource="EMBL-CDS" id="BAF13424"/>
    </conflict>
</comment>
<accession>Q852N2</accession>
<accession>Q0DMW4</accession>
<accession>Q10CA6</accession>
<keyword id="KW-1185">Reference proteome</keyword>
<keyword id="KW-0943">RNA-mediated gene silencing</keyword>
<protein>
    <recommendedName>
        <fullName>Protein argonaute 13</fullName>
        <shortName>OsAGO13</shortName>
    </recommendedName>
</protein>
<sequence>MPLKFCMERGFQSHPVRGCLVGASRFLSCIKFLVSINPESKSRATNREVLNELIKLHGKTSLGGKLPAYDGRKSLYTAGSLPFESEEFVVKLIDPEKKDKERAEREYKITIRIAGRTDFYHLQQFLLGRQRDMPQETIQFGHRGDIGEGLECWRGYYQSLRPTQMGLSLNIDISATSFFKPVTVIQFVEEFLNIRDTSRPLSDRDRVKIKKALRGVRIETNHQEDQIRRYKITGITPIPMSQLIFPVDDNGTRKTVVQYFWDRYNYRLKYASWPCLQSGSDSRPVYLPMEVCKIVEGQRYSKKLNNKQVTNILRATCQRPQQREQRIHEMVLHNKYTDDRFAQEFGIKVCNDLVSVPARVLPPPMLKYHDSGREKTCAPSVGQWNMINKKMINGGTVDNWTCLSFSRMRPEEVQRFCGDLIQMCNATGMSFNPRPVVDVRSSNPNNIENALRDVHSRTSELLAREGKGGLQLLIVILLEVSGSYGKIKRVCENDLGIVSQCCLPRHASRPNKQYLENVALKINVKKSQQSSLVLMSHTPPGEDSASSIAAVVASMDWPEITKYRGLVSAQSHRQEIIEDLFSVGKDPVKVVNGGMIREFLIAFRKKTGRRPERIIFYRDGVSEGQFSRVLLHEMDAIRKACASLEEGYLPPVTFVVVQKRHHTRLFPEVHGRRDMTDKSGNILPGTVKDRQICHPTEFYFYLCSHAGIQGTSRPTHYHVLYDENHFTADELQTLTNNLCYIYARCTHAVSVVPPAYYSHLAASHAHCCIKGHSSGSGSTPGNEHDIVKNSAPTLQILVKVLDFQIVPLTMKLKSSAEDIVALALSKHRVSLHDVYVYHGRRVIAKSLTLESLKADRDSTFLIMPRMRGGCNDTIGGFKCIPLEQHIRSLGDSLFEIIWIPPDLRVSGFCSYLIILGKPARKIICQLLKLLEIIHAANRFASRFTIADLVFLPDLGCIAFKKGVKIRWNLRREEYKLNMGDVASIISCWFRFNRRKLEALEAGIHELRPGQGDSPMFVDILVKDLRSPTHETGLSANYRGFYKNCSALRSCSAHMNLFTSLDIRKDFMVGSADWGNFVKALGDIKLPGWYRTAMRSPEMRKVLFFEFNDPHTGELRGKRYRALSVFSWLEFARIFIKHMKKGLCTDKQATALLCVIFSNIVPVVEKKLTYSYRPPAKEKSNESFTVEEILDPS</sequence>
<gene>
    <name type="primary">AGO13</name>
    <name type="ordered locus">Os03g0789500</name>
    <name type="ordered locus">LOC_Os03g57560</name>
    <name type="ORF">OSJNBa0087O09.9</name>
</gene>
<feature type="chain" id="PRO_0000378436" description="Protein argonaute 13">
    <location>
        <begin position="1"/>
        <end position="1192"/>
    </location>
</feature>
<feature type="domain" description="PAZ" evidence="2">
    <location>
        <begin position="183"/>
        <end position="296"/>
    </location>
</feature>
<feature type="domain" description="Piwi" evidence="3">
    <location>
        <begin position="472"/>
        <end position="770"/>
    </location>
</feature>
<reference key="1">
    <citation type="journal article" date="2005" name="Genome Res.">
        <title>Sequence, annotation, and analysis of synteny between rice chromosome 3 and diverged grass species.</title>
        <authorList>
            <consortium name="The rice chromosome 3 sequencing consortium"/>
            <person name="Buell C.R."/>
            <person name="Yuan Q."/>
            <person name="Ouyang S."/>
            <person name="Liu J."/>
            <person name="Zhu W."/>
            <person name="Wang A."/>
            <person name="Maiti R."/>
            <person name="Haas B."/>
            <person name="Wortman J."/>
            <person name="Pertea M."/>
            <person name="Jones K.M."/>
            <person name="Kim M."/>
            <person name="Overton L."/>
            <person name="Tsitrin T."/>
            <person name="Fadrosh D."/>
            <person name="Bera J."/>
            <person name="Weaver B."/>
            <person name="Jin S."/>
            <person name="Johri S."/>
            <person name="Reardon M."/>
            <person name="Webb K."/>
            <person name="Hill J."/>
            <person name="Moffat K."/>
            <person name="Tallon L."/>
            <person name="Van Aken S."/>
            <person name="Lewis M."/>
            <person name="Utterback T."/>
            <person name="Feldblyum T."/>
            <person name="Zismann V."/>
            <person name="Iobst S."/>
            <person name="Hsiao J."/>
            <person name="de Vazeille A.R."/>
            <person name="Salzberg S.L."/>
            <person name="White O."/>
            <person name="Fraser C.M."/>
            <person name="Yu Y."/>
            <person name="Kim H."/>
            <person name="Rambo T."/>
            <person name="Currie J."/>
            <person name="Collura K."/>
            <person name="Kernodle-Thompson S."/>
            <person name="Wei F."/>
            <person name="Kudrna K."/>
            <person name="Ammiraju J.S.S."/>
            <person name="Luo M."/>
            <person name="Goicoechea J.L."/>
            <person name="Wing R.A."/>
            <person name="Henry D."/>
            <person name="Oates R."/>
            <person name="Palmer M."/>
            <person name="Pries G."/>
            <person name="Saski C."/>
            <person name="Simmons J."/>
            <person name="Soderlund C."/>
            <person name="Nelson W."/>
            <person name="de la Bastide M."/>
            <person name="Spiegel L."/>
            <person name="Nascimento L."/>
            <person name="Huang E."/>
            <person name="Preston R."/>
            <person name="Zutavern T."/>
            <person name="Palmer L."/>
            <person name="O'Shaughnessy A."/>
            <person name="Dike S."/>
            <person name="McCombie W.R."/>
            <person name="Minx P."/>
            <person name="Cordum H."/>
            <person name="Wilson R."/>
            <person name="Jin W."/>
            <person name="Lee H.R."/>
            <person name="Jiang J."/>
            <person name="Jackson S."/>
        </authorList>
    </citation>
    <scope>NUCLEOTIDE SEQUENCE [LARGE SCALE GENOMIC DNA]</scope>
    <source>
        <strain>cv. Nipponbare</strain>
    </source>
</reference>
<reference key="2">
    <citation type="journal article" date="2005" name="Nature">
        <title>The map-based sequence of the rice genome.</title>
        <authorList>
            <consortium name="International rice genome sequencing project (IRGSP)"/>
        </authorList>
    </citation>
    <scope>NUCLEOTIDE SEQUENCE [LARGE SCALE GENOMIC DNA]</scope>
    <source>
        <strain>cv. Nipponbare</strain>
    </source>
</reference>
<reference key="3">
    <citation type="journal article" date="2008" name="Nucleic Acids Res.">
        <title>The rice annotation project database (RAP-DB): 2008 update.</title>
        <authorList>
            <consortium name="The rice annotation project (RAP)"/>
        </authorList>
    </citation>
    <scope>GENOME REANNOTATION</scope>
    <source>
        <strain>cv. Nipponbare</strain>
    </source>
</reference>
<reference key="4">
    <citation type="journal article" date="2013" name="Rice">
        <title>Improvement of the Oryza sativa Nipponbare reference genome using next generation sequence and optical map data.</title>
        <authorList>
            <person name="Kawahara Y."/>
            <person name="de la Bastide M."/>
            <person name="Hamilton J.P."/>
            <person name="Kanamori H."/>
            <person name="McCombie W.R."/>
            <person name="Ouyang S."/>
            <person name="Schwartz D.C."/>
            <person name="Tanaka T."/>
            <person name="Wu J."/>
            <person name="Zhou S."/>
            <person name="Childs K.L."/>
            <person name="Davidson R.M."/>
            <person name="Lin H."/>
            <person name="Quesada-Ocampo L."/>
            <person name="Vaillancourt B."/>
            <person name="Sakai H."/>
            <person name="Lee S.S."/>
            <person name="Kim J."/>
            <person name="Numa H."/>
            <person name="Itoh T."/>
            <person name="Buell C.R."/>
            <person name="Matsumoto T."/>
        </authorList>
    </citation>
    <scope>GENOME REANNOTATION</scope>
    <source>
        <strain>cv. Nipponbare</strain>
    </source>
</reference>
<reference key="5">
    <citation type="journal article" date="2003" name="Science">
        <title>Collection, mapping, and annotation of over 28,000 cDNA clones from japonica rice.</title>
        <authorList>
            <consortium name="The rice full-length cDNA consortium"/>
        </authorList>
    </citation>
    <scope>NUCLEOTIDE SEQUENCE [LARGE SCALE MRNA] OF 966-1192</scope>
    <source>
        <strain>cv. Nipponbare</strain>
    </source>
</reference>
<reference key="6">
    <citation type="journal article" date="2008" name="BMC Genomics">
        <title>Genome-wide identification, organization and phylogenetic analysis of dicer-like, argonaute and RNA-dependent RNA polymerase gene families and their expression analysis during reproductive development and stress in rice.</title>
        <authorList>
            <person name="Kapoor M."/>
            <person name="Arora R."/>
            <person name="Lama T."/>
            <person name="Nijhawan A."/>
            <person name="Khurana J.P."/>
            <person name="Tyagi A.K."/>
            <person name="Kapoor S."/>
        </authorList>
    </citation>
    <scope>GENE FAMILY</scope>
    <scope>NOMENCLATURE</scope>
</reference>
<dbReference type="EMBL" id="AC087096">
    <property type="protein sequence ID" value="AAO24917.1"/>
    <property type="molecule type" value="Genomic_DNA"/>
</dbReference>
<dbReference type="EMBL" id="DP000009">
    <property type="protein sequence ID" value="ABF99267.1"/>
    <property type="status" value="ALT_SEQ"/>
    <property type="molecule type" value="Genomic_DNA"/>
</dbReference>
<dbReference type="EMBL" id="AP008209">
    <property type="protein sequence ID" value="BAF13424.1"/>
    <property type="status" value="ALT_SEQ"/>
    <property type="molecule type" value="Genomic_DNA"/>
</dbReference>
<dbReference type="EMBL" id="AP014959">
    <property type="status" value="NOT_ANNOTATED_CDS"/>
    <property type="molecule type" value="Genomic_DNA"/>
</dbReference>
<dbReference type="EMBL" id="AK059333">
    <property type="status" value="NOT_ANNOTATED_CDS"/>
    <property type="molecule type" value="mRNA"/>
</dbReference>
<dbReference type="SMR" id="Q852N2"/>
<dbReference type="FunCoup" id="Q852N2">
    <property type="interactions" value="2009"/>
</dbReference>
<dbReference type="STRING" id="39947.Q852N2"/>
<dbReference type="PaxDb" id="39947-Q852N2"/>
<dbReference type="KEGG" id="dosa:Os03g0789500"/>
<dbReference type="InParanoid" id="Q852N2"/>
<dbReference type="Proteomes" id="UP000000763">
    <property type="component" value="Chromosome 3"/>
</dbReference>
<dbReference type="Proteomes" id="UP000059680">
    <property type="component" value="Chromosome 3"/>
</dbReference>
<dbReference type="GO" id="GO:0005737">
    <property type="term" value="C:cytoplasm"/>
    <property type="evidence" value="ECO:0000318"/>
    <property type="project" value="GO_Central"/>
</dbReference>
<dbReference type="GO" id="GO:0005634">
    <property type="term" value="C:nucleus"/>
    <property type="evidence" value="ECO:0000318"/>
    <property type="project" value="GO_Central"/>
</dbReference>
<dbReference type="GO" id="GO:0003723">
    <property type="term" value="F:RNA binding"/>
    <property type="evidence" value="ECO:0000318"/>
    <property type="project" value="GO_Central"/>
</dbReference>
<dbReference type="GO" id="GO:0004521">
    <property type="term" value="F:RNA endonuclease activity"/>
    <property type="evidence" value="ECO:0000318"/>
    <property type="project" value="GO_Central"/>
</dbReference>
<dbReference type="GO" id="GO:0031047">
    <property type="term" value="P:regulatory ncRNA-mediated gene silencing"/>
    <property type="evidence" value="ECO:0000318"/>
    <property type="project" value="GO_Central"/>
</dbReference>
<dbReference type="CDD" id="cd02846">
    <property type="entry name" value="PAZ_argonaute_like"/>
    <property type="match status" value="1"/>
</dbReference>
<dbReference type="CDD" id="cd04657">
    <property type="entry name" value="Piwi_ago-like"/>
    <property type="match status" value="1"/>
</dbReference>
<dbReference type="FunFam" id="3.40.50.2300:FF:000110">
    <property type="entry name" value="Argonaute 10"/>
    <property type="match status" value="1"/>
</dbReference>
<dbReference type="FunFam" id="3.30.420.10:FF:000013">
    <property type="entry name" value="protein argonaute 10-like"/>
    <property type="match status" value="1"/>
</dbReference>
<dbReference type="FunFam" id="2.170.260.10:FF:000001">
    <property type="entry name" value="Protein argonaute-2"/>
    <property type="match status" value="1"/>
</dbReference>
<dbReference type="Gene3D" id="3.40.50.2300">
    <property type="match status" value="1"/>
</dbReference>
<dbReference type="Gene3D" id="2.170.260.10">
    <property type="entry name" value="paz domain"/>
    <property type="match status" value="1"/>
</dbReference>
<dbReference type="Gene3D" id="3.30.420.10">
    <property type="entry name" value="Ribonuclease H-like superfamily/Ribonuclease H"/>
    <property type="match status" value="1"/>
</dbReference>
<dbReference type="InterPro" id="IPR014811">
    <property type="entry name" value="ArgoL1"/>
</dbReference>
<dbReference type="InterPro" id="IPR032472">
    <property type="entry name" value="ArgoL2"/>
</dbReference>
<dbReference type="InterPro" id="IPR032473">
    <property type="entry name" value="Argonaute_Mid_dom"/>
</dbReference>
<dbReference type="InterPro" id="IPR032474">
    <property type="entry name" value="Argonaute_N"/>
</dbReference>
<dbReference type="InterPro" id="IPR003100">
    <property type="entry name" value="PAZ_dom"/>
</dbReference>
<dbReference type="InterPro" id="IPR036085">
    <property type="entry name" value="PAZ_dom_sf"/>
</dbReference>
<dbReference type="InterPro" id="IPR003165">
    <property type="entry name" value="Piwi"/>
</dbReference>
<dbReference type="InterPro" id="IPR045246">
    <property type="entry name" value="Piwi_ago-like"/>
</dbReference>
<dbReference type="InterPro" id="IPR012337">
    <property type="entry name" value="RNaseH-like_sf"/>
</dbReference>
<dbReference type="InterPro" id="IPR036397">
    <property type="entry name" value="RNaseH_sf"/>
</dbReference>
<dbReference type="InterPro" id="IPR029071">
    <property type="entry name" value="Ubiquitin-like_domsf"/>
</dbReference>
<dbReference type="PANTHER" id="PTHR22891">
    <property type="entry name" value="EUKARYOTIC TRANSLATION INITIATION FACTOR 2C"/>
    <property type="match status" value="1"/>
</dbReference>
<dbReference type="Pfam" id="PF08699">
    <property type="entry name" value="ArgoL1"/>
    <property type="match status" value="1"/>
</dbReference>
<dbReference type="Pfam" id="PF16488">
    <property type="entry name" value="ArgoL2"/>
    <property type="match status" value="1"/>
</dbReference>
<dbReference type="Pfam" id="PF16487">
    <property type="entry name" value="ArgoMid"/>
    <property type="match status" value="1"/>
</dbReference>
<dbReference type="Pfam" id="PF16486">
    <property type="entry name" value="ArgoN"/>
    <property type="match status" value="1"/>
</dbReference>
<dbReference type="Pfam" id="PF02170">
    <property type="entry name" value="PAZ"/>
    <property type="match status" value="1"/>
</dbReference>
<dbReference type="Pfam" id="PF02171">
    <property type="entry name" value="Piwi"/>
    <property type="match status" value="1"/>
</dbReference>
<dbReference type="SMART" id="SM01163">
    <property type="entry name" value="DUF1785"/>
    <property type="match status" value="1"/>
</dbReference>
<dbReference type="SMART" id="SM00949">
    <property type="entry name" value="PAZ"/>
    <property type="match status" value="1"/>
</dbReference>
<dbReference type="SMART" id="SM00950">
    <property type="entry name" value="Piwi"/>
    <property type="match status" value="1"/>
</dbReference>
<dbReference type="SUPFAM" id="SSF101690">
    <property type="entry name" value="PAZ domain"/>
    <property type="match status" value="1"/>
</dbReference>
<dbReference type="SUPFAM" id="SSF53098">
    <property type="entry name" value="Ribonuclease H-like"/>
    <property type="match status" value="1"/>
</dbReference>
<dbReference type="SUPFAM" id="SSF54236">
    <property type="entry name" value="Ubiquitin-like"/>
    <property type="match status" value="1"/>
</dbReference>
<dbReference type="PROSITE" id="PS50821">
    <property type="entry name" value="PAZ"/>
    <property type="match status" value="1"/>
</dbReference>
<dbReference type="PROSITE" id="PS50822">
    <property type="entry name" value="PIWI"/>
    <property type="match status" value="1"/>
</dbReference>
<organism>
    <name type="scientific">Oryza sativa subsp. japonica</name>
    <name type="common">Rice</name>
    <dbReference type="NCBI Taxonomy" id="39947"/>
    <lineage>
        <taxon>Eukaryota</taxon>
        <taxon>Viridiplantae</taxon>
        <taxon>Streptophyta</taxon>
        <taxon>Embryophyta</taxon>
        <taxon>Tracheophyta</taxon>
        <taxon>Spermatophyta</taxon>
        <taxon>Magnoliopsida</taxon>
        <taxon>Liliopsida</taxon>
        <taxon>Poales</taxon>
        <taxon>Poaceae</taxon>
        <taxon>BOP clade</taxon>
        <taxon>Oryzoideae</taxon>
        <taxon>Oryzeae</taxon>
        <taxon>Oryzinae</taxon>
        <taxon>Oryza</taxon>
        <taxon>Oryza sativa</taxon>
    </lineage>
</organism>
<name>AGO13_ORYSJ</name>
<proteinExistence type="evidence at transcript level"/>